<proteinExistence type="inferred from homology"/>
<dbReference type="EMBL" id="CP000924">
    <property type="protein sequence ID" value="ABY93677.1"/>
    <property type="molecule type" value="Genomic_DNA"/>
</dbReference>
<dbReference type="RefSeq" id="WP_012268802.1">
    <property type="nucleotide sequence ID" value="NC_010321.1"/>
</dbReference>
<dbReference type="SMR" id="B0KAG3"/>
<dbReference type="STRING" id="340099.Teth39_0004"/>
<dbReference type="KEGG" id="tpd:Teth39_0004"/>
<dbReference type="eggNOG" id="COG1195">
    <property type="taxonomic scope" value="Bacteria"/>
</dbReference>
<dbReference type="HOGENOM" id="CLU_040267_0_1_9"/>
<dbReference type="Proteomes" id="UP000002156">
    <property type="component" value="Chromosome"/>
</dbReference>
<dbReference type="GO" id="GO:0005737">
    <property type="term" value="C:cytoplasm"/>
    <property type="evidence" value="ECO:0007669"/>
    <property type="project" value="UniProtKB-SubCell"/>
</dbReference>
<dbReference type="GO" id="GO:0005524">
    <property type="term" value="F:ATP binding"/>
    <property type="evidence" value="ECO:0007669"/>
    <property type="project" value="UniProtKB-UniRule"/>
</dbReference>
<dbReference type="GO" id="GO:0003697">
    <property type="term" value="F:single-stranded DNA binding"/>
    <property type="evidence" value="ECO:0007669"/>
    <property type="project" value="UniProtKB-UniRule"/>
</dbReference>
<dbReference type="GO" id="GO:0006260">
    <property type="term" value="P:DNA replication"/>
    <property type="evidence" value="ECO:0007669"/>
    <property type="project" value="UniProtKB-UniRule"/>
</dbReference>
<dbReference type="GO" id="GO:0000731">
    <property type="term" value="P:DNA synthesis involved in DNA repair"/>
    <property type="evidence" value="ECO:0007669"/>
    <property type="project" value="TreeGrafter"/>
</dbReference>
<dbReference type="GO" id="GO:0006302">
    <property type="term" value="P:double-strand break repair"/>
    <property type="evidence" value="ECO:0007669"/>
    <property type="project" value="TreeGrafter"/>
</dbReference>
<dbReference type="GO" id="GO:0009432">
    <property type="term" value="P:SOS response"/>
    <property type="evidence" value="ECO:0007669"/>
    <property type="project" value="UniProtKB-UniRule"/>
</dbReference>
<dbReference type="Gene3D" id="3.40.50.300">
    <property type="entry name" value="P-loop containing nucleotide triphosphate hydrolases"/>
    <property type="match status" value="1"/>
</dbReference>
<dbReference type="Gene3D" id="1.20.1050.90">
    <property type="entry name" value="RecF/RecN/SMC, N-terminal domain"/>
    <property type="match status" value="1"/>
</dbReference>
<dbReference type="HAMAP" id="MF_00365">
    <property type="entry name" value="RecF"/>
    <property type="match status" value="1"/>
</dbReference>
<dbReference type="InterPro" id="IPR001238">
    <property type="entry name" value="DNA-binding_RecF"/>
</dbReference>
<dbReference type="InterPro" id="IPR018078">
    <property type="entry name" value="DNA-binding_RecF_CS"/>
</dbReference>
<dbReference type="InterPro" id="IPR027417">
    <property type="entry name" value="P-loop_NTPase"/>
</dbReference>
<dbReference type="InterPro" id="IPR003395">
    <property type="entry name" value="RecF/RecN/SMC_N"/>
</dbReference>
<dbReference type="InterPro" id="IPR042174">
    <property type="entry name" value="RecF_2"/>
</dbReference>
<dbReference type="NCBIfam" id="TIGR00611">
    <property type="entry name" value="recf"/>
    <property type="match status" value="1"/>
</dbReference>
<dbReference type="PANTHER" id="PTHR32182">
    <property type="entry name" value="DNA REPLICATION AND REPAIR PROTEIN RECF"/>
    <property type="match status" value="1"/>
</dbReference>
<dbReference type="PANTHER" id="PTHR32182:SF0">
    <property type="entry name" value="DNA REPLICATION AND REPAIR PROTEIN RECF"/>
    <property type="match status" value="1"/>
</dbReference>
<dbReference type="Pfam" id="PF02463">
    <property type="entry name" value="SMC_N"/>
    <property type="match status" value="1"/>
</dbReference>
<dbReference type="SUPFAM" id="SSF52540">
    <property type="entry name" value="P-loop containing nucleoside triphosphate hydrolases"/>
    <property type="match status" value="1"/>
</dbReference>
<dbReference type="PROSITE" id="PS00617">
    <property type="entry name" value="RECF_1"/>
    <property type="match status" value="1"/>
</dbReference>
<dbReference type="PROSITE" id="PS00618">
    <property type="entry name" value="RECF_2"/>
    <property type="match status" value="1"/>
</dbReference>
<name>RECF_THEP3</name>
<evidence type="ECO:0000255" key="1">
    <source>
        <dbReference type="HAMAP-Rule" id="MF_00365"/>
    </source>
</evidence>
<sequence length="362" mass="42190">MYVKELFVDNFRNLQKQKIEFCEGINIFYGLNAQGKSNLLESIRLLSMGRSFRGSKTTELIKFGEDYFYVKAIICQENNDKKIEFGYKKNENKVIKVNGNKIKSTSELLGQLLTVIFSPEDLNIIKEGPSHRRKYLDSCISVVEKNYLYNLMQYNKILMNRNKLLKSIKEGKSKSILEIFDDQLVEYGAKIIVMRQNYLKNVEINIKKFLLEISNETAEIVYLNSVGLKDASDEEIVKKRLKEKLSKNIDVDLRYFTTQVGPHREDFKIIINGYDSRVYSSQGQQRTAALCLKLSEFEILKKETSEKPVLLLDDVMSELDENRKKYVLERLKGFQTFITHTTKRYLKGDCYFKISNGVVIKE</sequence>
<comment type="function">
    <text evidence="1">The RecF protein is involved in DNA metabolism; it is required for DNA replication and normal SOS inducibility. RecF binds preferentially to single-stranded, linear DNA. It also seems to bind ATP.</text>
</comment>
<comment type="subcellular location">
    <subcellularLocation>
        <location evidence="1">Cytoplasm</location>
    </subcellularLocation>
</comment>
<comment type="similarity">
    <text evidence="1">Belongs to the RecF family.</text>
</comment>
<gene>
    <name evidence="1" type="primary">recF</name>
    <name type="ordered locus">Teth39_0004</name>
</gene>
<organism>
    <name type="scientific">Thermoanaerobacter pseudethanolicus (strain ATCC 33223 / 39E)</name>
    <name type="common">Clostridium thermohydrosulfuricum</name>
    <dbReference type="NCBI Taxonomy" id="340099"/>
    <lineage>
        <taxon>Bacteria</taxon>
        <taxon>Bacillati</taxon>
        <taxon>Bacillota</taxon>
        <taxon>Clostridia</taxon>
        <taxon>Thermoanaerobacterales</taxon>
        <taxon>Thermoanaerobacteraceae</taxon>
        <taxon>Thermoanaerobacter</taxon>
    </lineage>
</organism>
<feature type="chain" id="PRO_1000121166" description="DNA replication and repair protein RecF">
    <location>
        <begin position="1"/>
        <end position="362"/>
    </location>
</feature>
<feature type="binding site" evidence="1">
    <location>
        <begin position="30"/>
        <end position="37"/>
    </location>
    <ligand>
        <name>ATP</name>
        <dbReference type="ChEBI" id="CHEBI:30616"/>
    </ligand>
</feature>
<accession>B0KAG3</accession>
<reference key="1">
    <citation type="submission" date="2008-01" db="EMBL/GenBank/DDBJ databases">
        <title>Complete sequence of Thermoanaerobacter pseudethanolicus 39E.</title>
        <authorList>
            <person name="Copeland A."/>
            <person name="Lucas S."/>
            <person name="Lapidus A."/>
            <person name="Barry K."/>
            <person name="Glavina del Rio T."/>
            <person name="Dalin E."/>
            <person name="Tice H."/>
            <person name="Pitluck S."/>
            <person name="Bruce D."/>
            <person name="Goodwin L."/>
            <person name="Saunders E."/>
            <person name="Brettin T."/>
            <person name="Detter J.C."/>
            <person name="Han C."/>
            <person name="Schmutz J."/>
            <person name="Larimer F."/>
            <person name="Land M."/>
            <person name="Hauser L."/>
            <person name="Kyrpides N."/>
            <person name="Lykidis A."/>
            <person name="Hemme C."/>
            <person name="Fields M.W."/>
            <person name="He Z."/>
            <person name="Zhou J."/>
            <person name="Richardson P."/>
        </authorList>
    </citation>
    <scope>NUCLEOTIDE SEQUENCE [LARGE SCALE GENOMIC DNA]</scope>
    <source>
        <strain>ATCC 33223 / DSM 2355 / 39E</strain>
    </source>
</reference>
<keyword id="KW-0067">ATP-binding</keyword>
<keyword id="KW-0963">Cytoplasm</keyword>
<keyword id="KW-0227">DNA damage</keyword>
<keyword id="KW-0234">DNA repair</keyword>
<keyword id="KW-0235">DNA replication</keyword>
<keyword id="KW-0238">DNA-binding</keyword>
<keyword id="KW-0547">Nucleotide-binding</keyword>
<keyword id="KW-1185">Reference proteome</keyword>
<keyword id="KW-0742">SOS response</keyword>
<protein>
    <recommendedName>
        <fullName evidence="1">DNA replication and repair protein RecF</fullName>
    </recommendedName>
</protein>